<name>SECY2_STRA3</name>
<reference key="1">
    <citation type="journal article" date="2002" name="Mol. Microbiol.">
        <title>Genome sequence of Streptococcus agalactiae, a pathogen causing invasive neonatal disease.</title>
        <authorList>
            <person name="Glaser P."/>
            <person name="Rusniok C."/>
            <person name="Buchrieser C."/>
            <person name="Chevalier F."/>
            <person name="Frangeul L."/>
            <person name="Msadek T."/>
            <person name="Zouine M."/>
            <person name="Couve E."/>
            <person name="Lalioui L."/>
            <person name="Poyart C."/>
            <person name="Trieu-Cuot P."/>
            <person name="Kunst F."/>
        </authorList>
    </citation>
    <scope>NUCLEOTIDE SEQUENCE [LARGE SCALE GENOMIC DNA]</scope>
    <source>
        <strain>NEM316</strain>
    </source>
</reference>
<organism>
    <name type="scientific">Streptococcus agalactiae serotype III (strain NEM316)</name>
    <dbReference type="NCBI Taxonomy" id="211110"/>
    <lineage>
        <taxon>Bacteria</taxon>
        <taxon>Bacillati</taxon>
        <taxon>Bacillota</taxon>
        <taxon>Bacilli</taxon>
        <taxon>Lactobacillales</taxon>
        <taxon>Streptococcaceae</taxon>
        <taxon>Streptococcus</taxon>
    </lineage>
</organism>
<evidence type="ECO:0000255" key="1">
    <source>
        <dbReference type="HAMAP-Rule" id="MF_01466"/>
    </source>
</evidence>
<accession>Q8E480</accession>
<sequence length="409" mass="46175">MKLLYIFEKNIILRKILITFSLIIIFLLGRYVPIPGVLISAYKGQDNNFATLYSTVTGGNLSQVGVFSLGIGPMMTTMILLRLFTIGKYSSGVSQKVQQFRQNVVMLVIAIIQGLAIAISFQYHNGFSLTKLLLATMILVTGAYIISWIGNLNAEYGFGGMTILVVVGMLVGQFNNIPLIFELFQDGYQLAIILFLLWTLVAMYLMITFERSEYRIPVMRTSIHNRLVDDAYMPIKVNASGGMAFMYVYTLLMFPQYIIILLRSIFPTNPDITSYNDYFSLSSIQGVVIYMILMLVLSVAFTFVNIDPTKISEAMRESGDFIPNYRPGKETQSYLSKICYLFGTFSGFFMAFLGGVPLLFALGNDDLRTVSSMTGIFMMITGMSFMILDEFQVIRIRKQYTSVFENEEN</sequence>
<keyword id="KW-1003">Cell membrane</keyword>
<keyword id="KW-0472">Membrane</keyword>
<keyword id="KW-0653">Protein transport</keyword>
<keyword id="KW-0811">Translocation</keyword>
<keyword id="KW-0812">Transmembrane</keyword>
<keyword id="KW-1133">Transmembrane helix</keyword>
<keyword id="KW-0813">Transport</keyword>
<comment type="function">
    <text evidence="1">Part of the accessory SecA2/SecY2 system specifically required for export of possible cell wall proteins. The central subunit of a protein translocation channel.</text>
</comment>
<comment type="subunit">
    <text evidence="1">Component of the accessory SecA2/SecY2 protein translocase complex required to export cell wall proteins. May form heterotrimers with SecE and SecG subunits.</text>
</comment>
<comment type="subcellular location">
    <subcellularLocation>
        <location evidence="1">Cell membrane</location>
        <topology evidence="1">Multi-pass membrane protein</topology>
    </subcellularLocation>
</comment>
<comment type="similarity">
    <text evidence="1">Belongs to the SecY/SEC61-alpha family. SecY2 subfamily.</text>
</comment>
<feature type="chain" id="PRO_0000414874" description="Accessory Sec system protein translocase subunit SecY2">
    <location>
        <begin position="1"/>
        <end position="409"/>
    </location>
</feature>
<feature type="transmembrane region" description="Helical" evidence="1">
    <location>
        <begin position="16"/>
        <end position="36"/>
    </location>
</feature>
<feature type="transmembrane region" description="Helical" evidence="1">
    <location>
        <begin position="61"/>
        <end position="81"/>
    </location>
</feature>
<feature type="transmembrane region" description="Helical" evidence="1">
    <location>
        <begin position="104"/>
        <end position="124"/>
    </location>
</feature>
<feature type="transmembrane region" description="Helical" evidence="1">
    <location>
        <begin position="132"/>
        <end position="152"/>
    </location>
</feature>
<feature type="transmembrane region" description="Helical" evidence="1">
    <location>
        <begin position="161"/>
        <end position="181"/>
    </location>
</feature>
<feature type="transmembrane region" description="Helical" evidence="1">
    <location>
        <begin position="190"/>
        <end position="210"/>
    </location>
</feature>
<feature type="transmembrane region" description="Helical" evidence="1">
    <location>
        <begin position="242"/>
        <end position="262"/>
    </location>
</feature>
<feature type="transmembrane region" description="Helical" evidence="1">
    <location>
        <begin position="286"/>
        <end position="306"/>
    </location>
</feature>
<feature type="transmembrane region" description="Helical" evidence="1">
    <location>
        <begin position="341"/>
        <end position="361"/>
    </location>
</feature>
<feature type="transmembrane region" description="Helical" evidence="1">
    <location>
        <begin position="374"/>
        <end position="394"/>
    </location>
</feature>
<proteinExistence type="inferred from homology"/>
<protein>
    <recommendedName>
        <fullName evidence="1">Accessory Sec system protein translocase subunit SecY2</fullName>
    </recommendedName>
</protein>
<gene>
    <name evidence="1" type="primary">secY2</name>
    <name type="ordered locus">gbs1522</name>
</gene>
<dbReference type="EMBL" id="AL766851">
    <property type="protein sequence ID" value="CAD47181.1"/>
    <property type="molecule type" value="Genomic_DNA"/>
</dbReference>
<dbReference type="RefSeq" id="WP_000772257.1">
    <property type="nucleotide sequence ID" value="NC_004368.1"/>
</dbReference>
<dbReference type="SMR" id="Q8E480"/>
<dbReference type="KEGG" id="san:gbs1522"/>
<dbReference type="eggNOG" id="COG0201">
    <property type="taxonomic scope" value="Bacteria"/>
</dbReference>
<dbReference type="HOGENOM" id="CLU_030313_4_0_9"/>
<dbReference type="Proteomes" id="UP000000823">
    <property type="component" value="Chromosome"/>
</dbReference>
<dbReference type="GO" id="GO:0005886">
    <property type="term" value="C:plasma membrane"/>
    <property type="evidence" value="ECO:0007669"/>
    <property type="project" value="UniProtKB-SubCell"/>
</dbReference>
<dbReference type="GO" id="GO:0065002">
    <property type="term" value="P:intracellular protein transmembrane transport"/>
    <property type="evidence" value="ECO:0007669"/>
    <property type="project" value="UniProtKB-UniRule"/>
</dbReference>
<dbReference type="GO" id="GO:0006605">
    <property type="term" value="P:protein targeting"/>
    <property type="evidence" value="ECO:0007669"/>
    <property type="project" value="UniProtKB-UniRule"/>
</dbReference>
<dbReference type="Gene3D" id="1.10.3370.10">
    <property type="entry name" value="SecY subunit domain"/>
    <property type="match status" value="1"/>
</dbReference>
<dbReference type="HAMAP" id="MF_01466">
    <property type="entry name" value="SecY2"/>
    <property type="match status" value="1"/>
</dbReference>
<dbReference type="InterPro" id="IPR002208">
    <property type="entry name" value="SecY/SEC61-alpha"/>
</dbReference>
<dbReference type="InterPro" id="IPR014269">
    <property type="entry name" value="SecY2"/>
</dbReference>
<dbReference type="InterPro" id="IPR023201">
    <property type="entry name" value="SecY_dom_sf"/>
</dbReference>
<dbReference type="NCBIfam" id="TIGR02920">
    <property type="entry name" value="acc_sec_Y2"/>
    <property type="match status" value="1"/>
</dbReference>
<dbReference type="NCBIfam" id="NF009082">
    <property type="entry name" value="PRK12417.1"/>
    <property type="match status" value="1"/>
</dbReference>
<dbReference type="PANTHER" id="PTHR10906">
    <property type="entry name" value="SECY/SEC61-ALPHA FAMILY MEMBER"/>
    <property type="match status" value="1"/>
</dbReference>
<dbReference type="Pfam" id="PF00344">
    <property type="entry name" value="SecY"/>
    <property type="match status" value="1"/>
</dbReference>
<dbReference type="PIRSF" id="PIRSF004557">
    <property type="entry name" value="SecY"/>
    <property type="match status" value="1"/>
</dbReference>
<dbReference type="PRINTS" id="PR00303">
    <property type="entry name" value="SECYTRNLCASE"/>
</dbReference>
<dbReference type="SUPFAM" id="SSF103491">
    <property type="entry name" value="Preprotein translocase SecY subunit"/>
    <property type="match status" value="1"/>
</dbReference>